<name>DDX46_DANRE</name>
<organism>
    <name type="scientific">Danio rerio</name>
    <name type="common">Zebrafish</name>
    <name type="synonym">Brachydanio rerio</name>
    <dbReference type="NCBI Taxonomy" id="7955"/>
    <lineage>
        <taxon>Eukaryota</taxon>
        <taxon>Metazoa</taxon>
        <taxon>Chordata</taxon>
        <taxon>Craniata</taxon>
        <taxon>Vertebrata</taxon>
        <taxon>Euteleostomi</taxon>
        <taxon>Actinopterygii</taxon>
        <taxon>Neopterygii</taxon>
        <taxon>Teleostei</taxon>
        <taxon>Ostariophysi</taxon>
        <taxon>Cypriniformes</taxon>
        <taxon>Danionidae</taxon>
        <taxon>Danioninae</taxon>
        <taxon>Danio</taxon>
    </lineage>
</organism>
<gene>
    <name type="primary">ddx46</name>
</gene>
<protein>
    <recommendedName>
        <fullName>Probable ATP-dependent RNA helicase DDX46</fullName>
        <ecNumber>3.6.4.13</ecNumber>
    </recommendedName>
    <alternativeName>
        <fullName>DEAD box protein 46</fullName>
    </alternativeName>
</protein>
<sequence length="1018" mass="115140">MGRESRHYRKRSSSRGRSGSLSKSRSPDSKRSKKDDRTASRTHSRRERSRSRERRRSRERKRQRRSSRDRRRSRSRERRRSKSRSRGRSKEKPENGDQTADKKKIKEEKEEEKPEDQDFDQNTLEEEMRKRKERVEKWREEQRKTAMENIGEIKKELEEMKQGKKWSLEDDDEEQDKAAEAEESERMEEEEVGEEVDPLDAYMEEVKEEVKKFNMGTMKGANDKKGGMSVTKVVTVVKTKKMPHATKKKGELMENDQDAMEYSSEEEEVDLQTALTGFQTKQRKVLEPVDHQKIQYEPFRKNFYVEVPELARMSPEEVSEYRLELEGISVKGKGCPKPIKTWVQCGISMKVLNALKKHNYEKPTPIQAQAIPAIMSGRDLIGIAKTGSGKTIAFLLPMFRHILDQRPVGEAEGPLAVIMTPTRELALQITKECKKFSKSLALRVVCVYGGTGISEQIAELKRGAEIIVCTPGRMIDMLGANNGRVTNLRRVTYVVIDEADRMFDMGFEPQVMRIVDNVRPDRQTVMFSATFPRTMEALARRILSKPVEVQVGGRSVVCSDVEQHVIVIEEEKKFLKLLEILGHYQEKGSVIIFVDKQEHADGLLKDLMKASYPCMSLHGGIDQYDRDSIINDFKNGACRLLVATSVAARGLDVKQLILVVNYSCPNHYEDYVHRAGRTGRAGNKGYAYTFITEGQARYSGDILKALELSGSSVPAELEQLWTNFKEQQKAEGKIIKSSSGFSGKGFKFDETEHALANERKKLQKWALGLHDSDDEDTALDIDEQIESMFNSKKRVKDFSAPGSVSAGSAGGVSGSVSAVSGLGSLSTPSAGNIQKLEIAKKLALRIQAQKNLGAEAQDVMQQATNAILRGGTIIAPSVSAKTIAEQQAEKINAKLNYTPVEKLEEERQAAEAAETVKRYEEELEINDFPQTARWKVTSKEALQRIGEYSEAAITIRGTYFPPGKEPKEGERKIYLAIESANELAVQKAKAEITRLIKEELIRLQNSYQPTSKGRYKVL</sequence>
<accession>Q4TVV3</accession>
<proteinExistence type="evidence at transcript level"/>
<dbReference type="EC" id="3.6.4.13"/>
<dbReference type="EMBL" id="DQ054379">
    <property type="protein sequence ID" value="AAY46301.1"/>
    <property type="molecule type" value="mRNA"/>
</dbReference>
<dbReference type="RefSeq" id="NP_001019988.1">
    <property type="nucleotide sequence ID" value="NM_001024817.1"/>
</dbReference>
<dbReference type="SMR" id="Q4TVV3"/>
<dbReference type="BioGRID" id="80628">
    <property type="interactions" value="1"/>
</dbReference>
<dbReference type="FunCoup" id="Q4TVV3">
    <property type="interactions" value="2858"/>
</dbReference>
<dbReference type="STRING" id="7955.ENSDARP00000135125"/>
<dbReference type="PaxDb" id="7955-ENSDARP00000129124"/>
<dbReference type="GeneID" id="321948"/>
<dbReference type="KEGG" id="dre:321948"/>
<dbReference type="AGR" id="ZFIN:ZDB-GENE-030131-667"/>
<dbReference type="CTD" id="9879"/>
<dbReference type="ZFIN" id="ZDB-GENE-030131-667">
    <property type="gene designation" value="ddx46"/>
</dbReference>
<dbReference type="eggNOG" id="KOG0334">
    <property type="taxonomic scope" value="Eukaryota"/>
</dbReference>
<dbReference type="InParanoid" id="Q4TVV3"/>
<dbReference type="OrthoDB" id="196131at2759"/>
<dbReference type="Reactome" id="R-DRE-72163">
    <property type="pathway name" value="mRNA Splicing - Major Pathway"/>
</dbReference>
<dbReference type="PRO" id="PR:Q4TVV3"/>
<dbReference type="Proteomes" id="UP000000437">
    <property type="component" value="Chromosome 21"/>
</dbReference>
<dbReference type="GO" id="GO:0015030">
    <property type="term" value="C:Cajal body"/>
    <property type="evidence" value="ECO:0007669"/>
    <property type="project" value="UniProtKB-SubCell"/>
</dbReference>
<dbReference type="GO" id="GO:0016607">
    <property type="term" value="C:nuclear speck"/>
    <property type="evidence" value="ECO:0007669"/>
    <property type="project" value="UniProtKB-SubCell"/>
</dbReference>
<dbReference type="GO" id="GO:0005634">
    <property type="term" value="C:nucleus"/>
    <property type="evidence" value="ECO:0000318"/>
    <property type="project" value="GO_Central"/>
</dbReference>
<dbReference type="GO" id="GO:0005684">
    <property type="term" value="C:U2-type spliceosomal complex"/>
    <property type="evidence" value="ECO:0000250"/>
    <property type="project" value="UniProtKB"/>
</dbReference>
<dbReference type="GO" id="GO:0005524">
    <property type="term" value="F:ATP binding"/>
    <property type="evidence" value="ECO:0007669"/>
    <property type="project" value="UniProtKB-KW"/>
</dbReference>
<dbReference type="GO" id="GO:0016887">
    <property type="term" value="F:ATP hydrolysis activity"/>
    <property type="evidence" value="ECO:0007669"/>
    <property type="project" value="RHEA"/>
</dbReference>
<dbReference type="GO" id="GO:0003723">
    <property type="term" value="F:RNA binding"/>
    <property type="evidence" value="ECO:0007669"/>
    <property type="project" value="UniProtKB-KW"/>
</dbReference>
<dbReference type="GO" id="GO:0003724">
    <property type="term" value="F:RNA helicase activity"/>
    <property type="evidence" value="ECO:0007669"/>
    <property type="project" value="UniProtKB-EC"/>
</dbReference>
<dbReference type="GO" id="GO:0007420">
    <property type="term" value="P:brain development"/>
    <property type="evidence" value="ECO:0000315"/>
    <property type="project" value="ZFIN"/>
</dbReference>
<dbReference type="GO" id="GO:0060216">
    <property type="term" value="P:definitive hemopoiesis"/>
    <property type="evidence" value="ECO:0000315"/>
    <property type="project" value="ZFIN"/>
</dbReference>
<dbReference type="GO" id="GO:0048546">
    <property type="term" value="P:digestive tract morphogenesis"/>
    <property type="evidence" value="ECO:0000315"/>
    <property type="project" value="ZFIN"/>
</dbReference>
<dbReference type="GO" id="GO:0031017">
    <property type="term" value="P:exocrine pancreas development"/>
    <property type="evidence" value="ECO:0000315"/>
    <property type="project" value="ZFIN"/>
</dbReference>
<dbReference type="GO" id="GO:0072576">
    <property type="term" value="P:liver morphogenesis"/>
    <property type="evidence" value="ECO:0000315"/>
    <property type="project" value="ZFIN"/>
</dbReference>
<dbReference type="GO" id="GO:0000398">
    <property type="term" value="P:mRNA splicing, via spliceosome"/>
    <property type="evidence" value="ECO:0000315"/>
    <property type="project" value="ZFIN"/>
</dbReference>
<dbReference type="GO" id="GO:0045648">
    <property type="term" value="P:positive regulation of erythrocyte differentiation"/>
    <property type="evidence" value="ECO:0000315"/>
    <property type="project" value="ZFIN"/>
</dbReference>
<dbReference type="GO" id="GO:1902038">
    <property type="term" value="P:positive regulation of hematopoietic stem cell differentiation"/>
    <property type="evidence" value="ECO:0000315"/>
    <property type="project" value="ZFIN"/>
</dbReference>
<dbReference type="GO" id="GO:0045621">
    <property type="term" value="P:positive regulation of lymphocyte differentiation"/>
    <property type="evidence" value="ECO:0000315"/>
    <property type="project" value="ZFIN"/>
</dbReference>
<dbReference type="GO" id="GO:1903241">
    <property type="term" value="P:U2-type prespliceosome assembly"/>
    <property type="evidence" value="ECO:0000250"/>
    <property type="project" value="UniProtKB"/>
</dbReference>
<dbReference type="CDD" id="cd17953">
    <property type="entry name" value="DEADc_DDX46"/>
    <property type="match status" value="1"/>
</dbReference>
<dbReference type="CDD" id="cd22473">
    <property type="entry name" value="KH-I_DDX46"/>
    <property type="match status" value="1"/>
</dbReference>
<dbReference type="CDD" id="cd18787">
    <property type="entry name" value="SF2_C_DEAD"/>
    <property type="match status" value="1"/>
</dbReference>
<dbReference type="FunFam" id="3.40.50.300:FF:000079">
    <property type="entry name" value="probable ATP-dependent RNA helicase DDX17"/>
    <property type="match status" value="1"/>
</dbReference>
<dbReference type="FunFam" id="3.40.50.300:FF:000584">
    <property type="entry name" value="probable ATP-dependent RNA helicase DDX46"/>
    <property type="match status" value="1"/>
</dbReference>
<dbReference type="Gene3D" id="3.40.50.300">
    <property type="entry name" value="P-loop containing nucleotide triphosphate hydrolases"/>
    <property type="match status" value="2"/>
</dbReference>
<dbReference type="InterPro" id="IPR011545">
    <property type="entry name" value="DEAD/DEAH_box_helicase_dom"/>
</dbReference>
<dbReference type="InterPro" id="IPR014001">
    <property type="entry name" value="Helicase_ATP-bd"/>
</dbReference>
<dbReference type="InterPro" id="IPR001650">
    <property type="entry name" value="Helicase_C-like"/>
</dbReference>
<dbReference type="InterPro" id="IPR027417">
    <property type="entry name" value="P-loop_NTPase"/>
</dbReference>
<dbReference type="InterPro" id="IPR056149">
    <property type="entry name" value="PRP5/DDX46/KHDC4_KH"/>
</dbReference>
<dbReference type="InterPro" id="IPR000629">
    <property type="entry name" value="RNA-helicase_DEAD-box_CS"/>
</dbReference>
<dbReference type="InterPro" id="IPR014014">
    <property type="entry name" value="RNA_helicase_DEAD_Q_motif"/>
</dbReference>
<dbReference type="PANTHER" id="PTHR47958">
    <property type="entry name" value="ATP-DEPENDENT RNA HELICASE DBP3"/>
    <property type="match status" value="1"/>
</dbReference>
<dbReference type="Pfam" id="PF00270">
    <property type="entry name" value="DEAD"/>
    <property type="match status" value="1"/>
</dbReference>
<dbReference type="Pfam" id="PF00271">
    <property type="entry name" value="Helicase_C"/>
    <property type="match status" value="1"/>
</dbReference>
<dbReference type="Pfam" id="PF23469">
    <property type="entry name" value="KH_12"/>
    <property type="match status" value="1"/>
</dbReference>
<dbReference type="SMART" id="SM00487">
    <property type="entry name" value="DEXDc"/>
    <property type="match status" value="1"/>
</dbReference>
<dbReference type="SMART" id="SM00490">
    <property type="entry name" value="HELICc"/>
    <property type="match status" value="1"/>
</dbReference>
<dbReference type="SUPFAM" id="SSF52540">
    <property type="entry name" value="P-loop containing nucleoside triphosphate hydrolases"/>
    <property type="match status" value="2"/>
</dbReference>
<dbReference type="PROSITE" id="PS00039">
    <property type="entry name" value="DEAD_ATP_HELICASE"/>
    <property type="match status" value="1"/>
</dbReference>
<dbReference type="PROSITE" id="PS51192">
    <property type="entry name" value="HELICASE_ATP_BIND_1"/>
    <property type="match status" value="1"/>
</dbReference>
<dbReference type="PROSITE" id="PS51194">
    <property type="entry name" value="HELICASE_CTER"/>
    <property type="match status" value="1"/>
</dbReference>
<dbReference type="PROSITE" id="PS51195">
    <property type="entry name" value="Q_MOTIF"/>
    <property type="match status" value="1"/>
</dbReference>
<evidence type="ECO:0000250" key="1">
    <source>
        <dbReference type="UniProtKB" id="Q7L014"/>
    </source>
</evidence>
<evidence type="ECO:0000255" key="2"/>
<evidence type="ECO:0000255" key="3">
    <source>
        <dbReference type="PROSITE-ProRule" id="PRU00541"/>
    </source>
</evidence>
<evidence type="ECO:0000255" key="4">
    <source>
        <dbReference type="PROSITE-ProRule" id="PRU00542"/>
    </source>
</evidence>
<evidence type="ECO:0000256" key="5">
    <source>
        <dbReference type="SAM" id="MobiDB-lite"/>
    </source>
</evidence>
<evidence type="ECO:0000305" key="6"/>
<comment type="function">
    <text evidence="1">Component of the 17S U2 SnRNP complex of the spliceosome, a large ribonucleoprotein complex that removes introns from transcribed pre-mRNAs. The 17S U2 SnRNP complex (1) directly participates in early spliceosome assembly and (2) mediates recognition of the intron branch site during pre-mRNA splicing by promoting the selection of the pre-mRNA branch-site adenosine, the nucleophile for the first step of splicing. Within the 17S U2 SnRNP complex, DDX46 plays essential roles during assembly of pre-spliceosome and proofreading of the branch site.</text>
</comment>
<comment type="catalytic activity">
    <reaction>
        <text>ATP + H2O = ADP + phosphate + H(+)</text>
        <dbReference type="Rhea" id="RHEA:13065"/>
        <dbReference type="ChEBI" id="CHEBI:15377"/>
        <dbReference type="ChEBI" id="CHEBI:15378"/>
        <dbReference type="ChEBI" id="CHEBI:30616"/>
        <dbReference type="ChEBI" id="CHEBI:43474"/>
        <dbReference type="ChEBI" id="CHEBI:456216"/>
        <dbReference type="EC" id="3.6.4.13"/>
    </reaction>
</comment>
<comment type="subunit">
    <text evidence="1">Component of the 17S U2 SnRNP complex, a ribonucleoprotein complex that contains small nuclear RNA (snRNA) U2 and a number of specific proteins.</text>
</comment>
<comment type="subcellular location">
    <subcellularLocation>
        <location evidence="1">Nucleus speckle</location>
    </subcellularLocation>
    <subcellularLocation>
        <location evidence="1">Nucleus</location>
        <location evidence="1">Cajal body</location>
    </subcellularLocation>
    <text evidence="1">Present in Cajal bodies (CBs) and nuclear speckles.</text>
</comment>
<comment type="similarity">
    <text evidence="6">Belongs to the DEAD box helicase family. DDX46/PRP5 subfamily.</text>
</comment>
<feature type="chain" id="PRO_0000055125" description="Probable ATP-dependent RNA helicase DDX46">
    <location>
        <begin position="1"/>
        <end position="1018"/>
    </location>
</feature>
<feature type="domain" description="Helicase ATP-binding" evidence="3">
    <location>
        <begin position="371"/>
        <end position="549"/>
    </location>
</feature>
<feature type="domain" description="Helicase C-terminal" evidence="4">
    <location>
        <begin position="560"/>
        <end position="721"/>
    </location>
</feature>
<feature type="region of interest" description="Disordered" evidence="5">
    <location>
        <begin position="1"/>
        <end position="200"/>
    </location>
</feature>
<feature type="coiled-coil region" evidence="2">
    <location>
        <begin position="900"/>
        <end position="927"/>
    </location>
</feature>
<feature type="short sequence motif" description="Q motif">
    <location>
        <begin position="340"/>
        <end position="368"/>
    </location>
</feature>
<feature type="short sequence motif" description="DEAD box">
    <location>
        <begin position="497"/>
        <end position="500"/>
    </location>
</feature>
<feature type="compositionally biased region" description="Basic residues" evidence="5">
    <location>
        <begin position="1"/>
        <end position="14"/>
    </location>
</feature>
<feature type="compositionally biased region" description="Low complexity" evidence="5">
    <location>
        <begin position="15"/>
        <end position="24"/>
    </location>
</feature>
<feature type="compositionally biased region" description="Basic and acidic residues" evidence="5">
    <location>
        <begin position="25"/>
        <end position="39"/>
    </location>
</feature>
<feature type="compositionally biased region" description="Basic residues" evidence="5">
    <location>
        <begin position="40"/>
        <end position="87"/>
    </location>
</feature>
<feature type="compositionally biased region" description="Basic and acidic residues" evidence="5">
    <location>
        <begin position="88"/>
        <end position="112"/>
    </location>
</feature>
<feature type="compositionally biased region" description="Acidic residues" evidence="5">
    <location>
        <begin position="113"/>
        <end position="125"/>
    </location>
</feature>
<feature type="compositionally biased region" description="Basic and acidic residues" evidence="5">
    <location>
        <begin position="126"/>
        <end position="168"/>
    </location>
</feature>
<feature type="compositionally biased region" description="Acidic residues" evidence="5">
    <location>
        <begin position="169"/>
        <end position="200"/>
    </location>
</feature>
<feature type="binding site" evidence="3">
    <location>
        <begin position="384"/>
        <end position="391"/>
    </location>
    <ligand>
        <name>ATP</name>
        <dbReference type="ChEBI" id="CHEBI:30616"/>
    </ligand>
</feature>
<reference key="1">
    <citation type="submission" date="2005-05" db="EMBL/GenBank/DDBJ databases">
        <title>The Danio rerio ddx46 gene.</title>
        <authorList>
            <person name="Amsterdam A."/>
            <person name="Hopkins N."/>
        </authorList>
    </citation>
    <scope>NUCLEOTIDE SEQUENCE [MRNA]</scope>
</reference>
<keyword id="KW-0067">ATP-binding</keyword>
<keyword id="KW-0175">Coiled coil</keyword>
<keyword id="KW-0347">Helicase</keyword>
<keyword id="KW-0378">Hydrolase</keyword>
<keyword id="KW-0507">mRNA processing</keyword>
<keyword id="KW-0508">mRNA splicing</keyword>
<keyword id="KW-0547">Nucleotide-binding</keyword>
<keyword id="KW-0539">Nucleus</keyword>
<keyword id="KW-1185">Reference proteome</keyword>
<keyword id="KW-0694">RNA-binding</keyword>
<keyword id="KW-0747">Spliceosome</keyword>